<name>NDHO_PROM9</name>
<feature type="chain" id="PRO_0000353644" description="NAD(P)H-quinone oxidoreductase subunit O">
    <location>
        <begin position="1"/>
        <end position="78"/>
    </location>
</feature>
<keyword id="KW-0472">Membrane</keyword>
<keyword id="KW-0520">NAD</keyword>
<keyword id="KW-0521">NADP</keyword>
<keyword id="KW-0618">Plastoquinone</keyword>
<keyword id="KW-0874">Quinone</keyword>
<keyword id="KW-0793">Thylakoid</keyword>
<keyword id="KW-1278">Translocase</keyword>
<keyword id="KW-0813">Transport</keyword>
<gene>
    <name evidence="1" type="primary">ndhO</name>
    <name type="ordered locus">PMT9312_0124</name>
</gene>
<sequence>MTDSIPKKPLKKGSLVFVDRGNYIKSIEALASDNDLPNYVFEGPGEILSVKDEYAQVRWRRPVPDVWFKLDQLKEYIQ</sequence>
<reference key="1">
    <citation type="journal article" date="2006" name="Science">
        <title>Genomic islands and the ecology and evolution of Prochlorococcus.</title>
        <authorList>
            <person name="Coleman M.L."/>
            <person name="Sullivan M.B."/>
            <person name="Martiny A.C."/>
            <person name="Steglich C."/>
            <person name="Barry K."/>
            <person name="Delong E.F."/>
            <person name="Chisholm S.W."/>
        </authorList>
    </citation>
    <scope>NUCLEOTIDE SEQUENCE [LARGE SCALE GENOMIC DNA]</scope>
    <source>
        <strain>MIT 9312</strain>
    </source>
</reference>
<evidence type="ECO:0000255" key="1">
    <source>
        <dbReference type="HAMAP-Rule" id="MF_01354"/>
    </source>
</evidence>
<organism>
    <name type="scientific">Prochlorococcus marinus (strain MIT 9312)</name>
    <dbReference type="NCBI Taxonomy" id="74546"/>
    <lineage>
        <taxon>Bacteria</taxon>
        <taxon>Bacillati</taxon>
        <taxon>Cyanobacteriota</taxon>
        <taxon>Cyanophyceae</taxon>
        <taxon>Synechococcales</taxon>
        <taxon>Prochlorococcaceae</taxon>
        <taxon>Prochlorococcus</taxon>
    </lineage>
</organism>
<comment type="function">
    <text evidence="1">NDH-1 shuttles electrons from an unknown electron donor, via FMN and iron-sulfur (Fe-S) centers, to quinones in the respiratory and/or the photosynthetic chain. The immediate electron acceptor for the enzyme in this species is believed to be plastoquinone. Couples the redox reaction to proton translocation, and thus conserves the redox energy in a proton gradient. Cyanobacterial NDH-1 also plays a role in inorganic carbon-concentration.</text>
</comment>
<comment type="catalytic activity">
    <reaction evidence="1">
        <text>a plastoquinone + NADH + (n+1) H(+)(in) = a plastoquinol + NAD(+) + n H(+)(out)</text>
        <dbReference type="Rhea" id="RHEA:42608"/>
        <dbReference type="Rhea" id="RHEA-COMP:9561"/>
        <dbReference type="Rhea" id="RHEA-COMP:9562"/>
        <dbReference type="ChEBI" id="CHEBI:15378"/>
        <dbReference type="ChEBI" id="CHEBI:17757"/>
        <dbReference type="ChEBI" id="CHEBI:57540"/>
        <dbReference type="ChEBI" id="CHEBI:57945"/>
        <dbReference type="ChEBI" id="CHEBI:62192"/>
    </reaction>
</comment>
<comment type="catalytic activity">
    <reaction evidence="1">
        <text>a plastoquinone + NADPH + (n+1) H(+)(in) = a plastoquinol + NADP(+) + n H(+)(out)</text>
        <dbReference type="Rhea" id="RHEA:42612"/>
        <dbReference type="Rhea" id="RHEA-COMP:9561"/>
        <dbReference type="Rhea" id="RHEA-COMP:9562"/>
        <dbReference type="ChEBI" id="CHEBI:15378"/>
        <dbReference type="ChEBI" id="CHEBI:17757"/>
        <dbReference type="ChEBI" id="CHEBI:57783"/>
        <dbReference type="ChEBI" id="CHEBI:58349"/>
        <dbReference type="ChEBI" id="CHEBI:62192"/>
    </reaction>
</comment>
<comment type="subunit">
    <text evidence="1">NDH-1 can be composed of about 15 different subunits; different subcomplexes with different compositions have been identified which probably have different functions.</text>
</comment>
<comment type="subcellular location">
    <subcellularLocation>
        <location evidence="1">Cellular thylakoid membrane</location>
        <topology evidence="1">Peripheral membrane protein</topology>
        <orientation evidence="1">Cytoplasmic side</orientation>
    </subcellularLocation>
</comment>
<comment type="similarity">
    <text evidence="1">Belongs to the complex I NdhO subunit family.</text>
</comment>
<dbReference type="EC" id="7.1.1.-" evidence="1"/>
<dbReference type="EMBL" id="CP000111">
    <property type="protein sequence ID" value="ABB49186.1"/>
    <property type="molecule type" value="Genomic_DNA"/>
</dbReference>
<dbReference type="RefSeq" id="WP_011375690.1">
    <property type="nucleotide sequence ID" value="NC_007577.1"/>
</dbReference>
<dbReference type="SMR" id="Q31D59"/>
<dbReference type="STRING" id="74546.PMT9312_0124"/>
<dbReference type="KEGG" id="pmi:PMT9312_0124"/>
<dbReference type="eggNOG" id="ENOG5031XXZ">
    <property type="taxonomic scope" value="Bacteria"/>
</dbReference>
<dbReference type="HOGENOM" id="CLU_195299_0_0_3"/>
<dbReference type="OrthoDB" id="426633at2"/>
<dbReference type="Proteomes" id="UP000002715">
    <property type="component" value="Chromosome"/>
</dbReference>
<dbReference type="GO" id="GO:0031676">
    <property type="term" value="C:plasma membrane-derived thylakoid membrane"/>
    <property type="evidence" value="ECO:0007669"/>
    <property type="project" value="UniProtKB-SubCell"/>
</dbReference>
<dbReference type="GO" id="GO:0016655">
    <property type="term" value="F:oxidoreductase activity, acting on NAD(P)H, quinone or similar compound as acceptor"/>
    <property type="evidence" value="ECO:0007669"/>
    <property type="project" value="UniProtKB-UniRule"/>
</dbReference>
<dbReference type="GO" id="GO:0048038">
    <property type="term" value="F:quinone binding"/>
    <property type="evidence" value="ECO:0007669"/>
    <property type="project" value="UniProtKB-KW"/>
</dbReference>
<dbReference type="HAMAP" id="MF_01354">
    <property type="entry name" value="NDH1_NDH1O"/>
    <property type="match status" value="1"/>
</dbReference>
<dbReference type="InterPro" id="IPR020905">
    <property type="entry name" value="NdhO"/>
</dbReference>
<dbReference type="Pfam" id="PF11910">
    <property type="entry name" value="NdhO"/>
    <property type="match status" value="1"/>
</dbReference>
<accession>Q31D59</accession>
<proteinExistence type="inferred from homology"/>
<protein>
    <recommendedName>
        <fullName evidence="1">NAD(P)H-quinone oxidoreductase subunit O</fullName>
        <ecNumber evidence="1">7.1.1.-</ecNumber>
    </recommendedName>
    <alternativeName>
        <fullName evidence="1">NAD(P)H dehydrogenase I subunit O</fullName>
    </alternativeName>
    <alternativeName>
        <fullName>NDH-1 subunit O</fullName>
    </alternativeName>
    <alternativeName>
        <fullName>NDH-O</fullName>
    </alternativeName>
</protein>